<name>UPP_CORGB</name>
<evidence type="ECO:0000255" key="1">
    <source>
        <dbReference type="HAMAP-Rule" id="MF_01218"/>
    </source>
</evidence>
<keyword id="KW-0021">Allosteric enzyme</keyword>
<keyword id="KW-0328">Glycosyltransferase</keyword>
<keyword id="KW-0342">GTP-binding</keyword>
<keyword id="KW-0460">Magnesium</keyword>
<keyword id="KW-0547">Nucleotide-binding</keyword>
<keyword id="KW-0808">Transferase</keyword>
<comment type="function">
    <text evidence="1">Catalyzes the conversion of uracil and 5-phospho-alpha-D-ribose 1-diphosphate (PRPP) to UMP and diphosphate.</text>
</comment>
<comment type="catalytic activity">
    <reaction evidence="1">
        <text>UMP + diphosphate = 5-phospho-alpha-D-ribose 1-diphosphate + uracil</text>
        <dbReference type="Rhea" id="RHEA:13017"/>
        <dbReference type="ChEBI" id="CHEBI:17568"/>
        <dbReference type="ChEBI" id="CHEBI:33019"/>
        <dbReference type="ChEBI" id="CHEBI:57865"/>
        <dbReference type="ChEBI" id="CHEBI:58017"/>
        <dbReference type="EC" id="2.4.2.9"/>
    </reaction>
</comment>
<comment type="cofactor">
    <cofactor evidence="1">
        <name>Mg(2+)</name>
        <dbReference type="ChEBI" id="CHEBI:18420"/>
    </cofactor>
    <text evidence="1">Binds 1 Mg(2+) ion per subunit. The magnesium is bound as Mg-PRPP.</text>
</comment>
<comment type="activity regulation">
    <text evidence="1">Allosterically activated by GTP.</text>
</comment>
<comment type="pathway">
    <text evidence="1">Pyrimidine metabolism; UMP biosynthesis via salvage pathway; UMP from uracil: step 1/1.</text>
</comment>
<comment type="similarity">
    <text evidence="1">Belongs to the UPRTase family.</text>
</comment>
<gene>
    <name evidence="1" type="primary">upp</name>
    <name type="ordered locus">cgR_0804</name>
</gene>
<sequence>MDITIVNHPLVASRLTLLRDERSDNAAFRAAANDLGAMLIYEASRDLEVEHFDTKTPVAMAEGTRLKQPPIIVPIIRAGLGMIDPALSMIPDAQVGFIGLARDEETHEPVPYLEALPQDLSNQPVFLVDPMLATGGSLLHAIRLLADRGATDITAICMVSAQPGVDALAESGLPVRLVTATIDPGLDENAYIVPGLGDAGDRLYGPRNIDL</sequence>
<dbReference type="EC" id="2.4.2.9" evidence="1"/>
<dbReference type="EMBL" id="AP009044">
    <property type="protein sequence ID" value="BAF53776.1"/>
    <property type="molecule type" value="Genomic_DNA"/>
</dbReference>
<dbReference type="RefSeq" id="WP_003858289.1">
    <property type="nucleotide sequence ID" value="NC_009342.1"/>
</dbReference>
<dbReference type="SMR" id="A4QC29"/>
<dbReference type="GeneID" id="1018683"/>
<dbReference type="KEGG" id="cgt:cgR_0804"/>
<dbReference type="HOGENOM" id="CLU_067096_2_3_11"/>
<dbReference type="PhylomeDB" id="A4QC29"/>
<dbReference type="UniPathway" id="UPA00574">
    <property type="reaction ID" value="UER00636"/>
</dbReference>
<dbReference type="Proteomes" id="UP000006698">
    <property type="component" value="Chromosome"/>
</dbReference>
<dbReference type="GO" id="GO:0005525">
    <property type="term" value="F:GTP binding"/>
    <property type="evidence" value="ECO:0007669"/>
    <property type="project" value="UniProtKB-KW"/>
</dbReference>
<dbReference type="GO" id="GO:0000287">
    <property type="term" value="F:magnesium ion binding"/>
    <property type="evidence" value="ECO:0007669"/>
    <property type="project" value="UniProtKB-UniRule"/>
</dbReference>
<dbReference type="GO" id="GO:0004845">
    <property type="term" value="F:uracil phosphoribosyltransferase activity"/>
    <property type="evidence" value="ECO:0007669"/>
    <property type="project" value="UniProtKB-UniRule"/>
</dbReference>
<dbReference type="GO" id="GO:0044206">
    <property type="term" value="P:UMP salvage"/>
    <property type="evidence" value="ECO:0007669"/>
    <property type="project" value="UniProtKB-UniRule"/>
</dbReference>
<dbReference type="GO" id="GO:0006223">
    <property type="term" value="P:uracil salvage"/>
    <property type="evidence" value="ECO:0007669"/>
    <property type="project" value="InterPro"/>
</dbReference>
<dbReference type="CDD" id="cd06223">
    <property type="entry name" value="PRTases_typeI"/>
    <property type="match status" value="1"/>
</dbReference>
<dbReference type="FunFam" id="3.40.50.2020:FF:000003">
    <property type="entry name" value="Uracil phosphoribosyltransferase"/>
    <property type="match status" value="1"/>
</dbReference>
<dbReference type="Gene3D" id="3.40.50.2020">
    <property type="match status" value="1"/>
</dbReference>
<dbReference type="HAMAP" id="MF_01218_B">
    <property type="entry name" value="Upp_B"/>
    <property type="match status" value="1"/>
</dbReference>
<dbReference type="InterPro" id="IPR000836">
    <property type="entry name" value="PRibTrfase_dom"/>
</dbReference>
<dbReference type="InterPro" id="IPR029057">
    <property type="entry name" value="PRTase-like"/>
</dbReference>
<dbReference type="InterPro" id="IPR034332">
    <property type="entry name" value="Upp_B"/>
</dbReference>
<dbReference type="InterPro" id="IPR050054">
    <property type="entry name" value="UPRTase/APRTase"/>
</dbReference>
<dbReference type="InterPro" id="IPR005765">
    <property type="entry name" value="Ura_phspho_trans"/>
</dbReference>
<dbReference type="NCBIfam" id="NF001097">
    <property type="entry name" value="PRK00129.1"/>
    <property type="match status" value="1"/>
</dbReference>
<dbReference type="NCBIfam" id="TIGR01091">
    <property type="entry name" value="upp"/>
    <property type="match status" value="1"/>
</dbReference>
<dbReference type="PANTHER" id="PTHR32315">
    <property type="entry name" value="ADENINE PHOSPHORIBOSYLTRANSFERASE"/>
    <property type="match status" value="1"/>
</dbReference>
<dbReference type="PANTHER" id="PTHR32315:SF4">
    <property type="entry name" value="URACIL PHOSPHORIBOSYLTRANSFERASE, CHLOROPLASTIC"/>
    <property type="match status" value="1"/>
</dbReference>
<dbReference type="Pfam" id="PF14681">
    <property type="entry name" value="UPRTase"/>
    <property type="match status" value="1"/>
</dbReference>
<dbReference type="SUPFAM" id="SSF53271">
    <property type="entry name" value="PRTase-like"/>
    <property type="match status" value="1"/>
</dbReference>
<accession>A4QC29</accession>
<protein>
    <recommendedName>
        <fullName evidence="1">Uracil phosphoribosyltransferase</fullName>
        <ecNumber evidence="1">2.4.2.9</ecNumber>
    </recommendedName>
    <alternativeName>
        <fullName evidence="1">UMP pyrophosphorylase</fullName>
    </alternativeName>
    <alternativeName>
        <fullName evidence="1">UPRTase</fullName>
    </alternativeName>
</protein>
<proteinExistence type="inferred from homology"/>
<organism>
    <name type="scientific">Corynebacterium glutamicum (strain R)</name>
    <dbReference type="NCBI Taxonomy" id="340322"/>
    <lineage>
        <taxon>Bacteria</taxon>
        <taxon>Bacillati</taxon>
        <taxon>Actinomycetota</taxon>
        <taxon>Actinomycetes</taxon>
        <taxon>Mycobacteriales</taxon>
        <taxon>Corynebacteriaceae</taxon>
        <taxon>Corynebacterium</taxon>
    </lineage>
</organism>
<reference key="1">
    <citation type="journal article" date="2007" name="Microbiology">
        <title>Comparative analysis of the Corynebacterium glutamicum group and complete genome sequence of strain R.</title>
        <authorList>
            <person name="Yukawa H."/>
            <person name="Omumasaba C.A."/>
            <person name="Nonaka H."/>
            <person name="Kos P."/>
            <person name="Okai N."/>
            <person name="Suzuki N."/>
            <person name="Suda M."/>
            <person name="Tsuge Y."/>
            <person name="Watanabe J."/>
            <person name="Ikeda Y."/>
            <person name="Vertes A.A."/>
            <person name="Inui M."/>
        </authorList>
    </citation>
    <scope>NUCLEOTIDE SEQUENCE [LARGE SCALE GENOMIC DNA]</scope>
    <source>
        <strain>R</strain>
    </source>
</reference>
<feature type="chain" id="PRO_1000053711" description="Uracil phosphoribosyltransferase">
    <location>
        <begin position="1"/>
        <end position="211"/>
    </location>
</feature>
<feature type="binding site" evidence="1">
    <location>
        <position position="77"/>
    </location>
    <ligand>
        <name>5-phospho-alpha-D-ribose 1-diphosphate</name>
        <dbReference type="ChEBI" id="CHEBI:58017"/>
    </ligand>
</feature>
<feature type="binding site" evidence="1">
    <location>
        <position position="102"/>
    </location>
    <ligand>
        <name>5-phospho-alpha-D-ribose 1-diphosphate</name>
        <dbReference type="ChEBI" id="CHEBI:58017"/>
    </ligand>
</feature>
<feature type="binding site" evidence="1">
    <location>
        <begin position="129"/>
        <end position="137"/>
    </location>
    <ligand>
        <name>5-phospho-alpha-D-ribose 1-diphosphate</name>
        <dbReference type="ChEBI" id="CHEBI:58017"/>
    </ligand>
</feature>
<feature type="binding site" evidence="1">
    <location>
        <position position="192"/>
    </location>
    <ligand>
        <name>uracil</name>
        <dbReference type="ChEBI" id="CHEBI:17568"/>
    </ligand>
</feature>
<feature type="binding site" evidence="1">
    <location>
        <begin position="197"/>
        <end position="199"/>
    </location>
    <ligand>
        <name>uracil</name>
        <dbReference type="ChEBI" id="CHEBI:17568"/>
    </ligand>
</feature>
<feature type="binding site" evidence="1">
    <location>
        <position position="198"/>
    </location>
    <ligand>
        <name>5-phospho-alpha-D-ribose 1-diphosphate</name>
        <dbReference type="ChEBI" id="CHEBI:58017"/>
    </ligand>
</feature>